<proteinExistence type="inferred from homology"/>
<dbReference type="EC" id="2.7.7.6" evidence="1"/>
<dbReference type="EMBL" id="CP000921">
    <property type="protein sequence ID" value="ACO24245.1"/>
    <property type="molecule type" value="Genomic_DNA"/>
</dbReference>
<dbReference type="RefSeq" id="WP_000907145.1">
    <property type="nucleotide sequence ID" value="NC_012469.1"/>
</dbReference>
<dbReference type="SMR" id="C1CTL4"/>
<dbReference type="GeneID" id="45652826"/>
<dbReference type="KEGG" id="snt:SPT_1938"/>
<dbReference type="HOGENOM" id="CLU_000524_4_1_9"/>
<dbReference type="GO" id="GO:0000428">
    <property type="term" value="C:DNA-directed RNA polymerase complex"/>
    <property type="evidence" value="ECO:0007669"/>
    <property type="project" value="UniProtKB-KW"/>
</dbReference>
<dbReference type="GO" id="GO:0003677">
    <property type="term" value="F:DNA binding"/>
    <property type="evidence" value="ECO:0007669"/>
    <property type="project" value="UniProtKB-UniRule"/>
</dbReference>
<dbReference type="GO" id="GO:0003899">
    <property type="term" value="F:DNA-directed RNA polymerase activity"/>
    <property type="evidence" value="ECO:0007669"/>
    <property type="project" value="UniProtKB-UniRule"/>
</dbReference>
<dbReference type="GO" id="GO:0032549">
    <property type="term" value="F:ribonucleoside binding"/>
    <property type="evidence" value="ECO:0007669"/>
    <property type="project" value="InterPro"/>
</dbReference>
<dbReference type="GO" id="GO:0006351">
    <property type="term" value="P:DNA-templated transcription"/>
    <property type="evidence" value="ECO:0007669"/>
    <property type="project" value="UniProtKB-UniRule"/>
</dbReference>
<dbReference type="CDD" id="cd00653">
    <property type="entry name" value="RNA_pol_B_RPB2"/>
    <property type="match status" value="1"/>
</dbReference>
<dbReference type="Gene3D" id="2.40.50.100">
    <property type="match status" value="1"/>
</dbReference>
<dbReference type="Gene3D" id="2.40.50.150">
    <property type="match status" value="1"/>
</dbReference>
<dbReference type="Gene3D" id="3.90.1100.10">
    <property type="match status" value="2"/>
</dbReference>
<dbReference type="Gene3D" id="2.30.150.10">
    <property type="entry name" value="DNA-directed RNA polymerase, beta subunit, external 1 domain"/>
    <property type="match status" value="1"/>
</dbReference>
<dbReference type="Gene3D" id="2.40.270.10">
    <property type="entry name" value="DNA-directed RNA polymerase, subunit 2, domain 6"/>
    <property type="match status" value="1"/>
</dbReference>
<dbReference type="Gene3D" id="3.90.1800.10">
    <property type="entry name" value="RNA polymerase alpha subunit dimerisation domain"/>
    <property type="match status" value="1"/>
</dbReference>
<dbReference type="Gene3D" id="3.90.1110.10">
    <property type="entry name" value="RNA polymerase Rpb2, domain 2"/>
    <property type="match status" value="1"/>
</dbReference>
<dbReference type="HAMAP" id="MF_01321">
    <property type="entry name" value="RNApol_bact_RpoB"/>
    <property type="match status" value="1"/>
</dbReference>
<dbReference type="InterPro" id="IPR042107">
    <property type="entry name" value="DNA-dir_RNA_pol_bsu_ext_1_sf"/>
</dbReference>
<dbReference type="InterPro" id="IPR019462">
    <property type="entry name" value="DNA-dir_RNA_pol_bsu_external_1"/>
</dbReference>
<dbReference type="InterPro" id="IPR015712">
    <property type="entry name" value="DNA-dir_RNA_pol_su2"/>
</dbReference>
<dbReference type="InterPro" id="IPR007120">
    <property type="entry name" value="DNA-dir_RNAP_su2_dom"/>
</dbReference>
<dbReference type="InterPro" id="IPR037033">
    <property type="entry name" value="DNA-dir_RNAP_su2_hyb_sf"/>
</dbReference>
<dbReference type="InterPro" id="IPR010243">
    <property type="entry name" value="RNA_pol_bsu_bac"/>
</dbReference>
<dbReference type="InterPro" id="IPR007121">
    <property type="entry name" value="RNA_pol_bsu_CS"/>
</dbReference>
<dbReference type="InterPro" id="IPR007644">
    <property type="entry name" value="RNA_pol_bsu_protrusion"/>
</dbReference>
<dbReference type="InterPro" id="IPR007642">
    <property type="entry name" value="RNA_pol_Rpb2_2"/>
</dbReference>
<dbReference type="InterPro" id="IPR037034">
    <property type="entry name" value="RNA_pol_Rpb2_2_sf"/>
</dbReference>
<dbReference type="InterPro" id="IPR007645">
    <property type="entry name" value="RNA_pol_Rpb2_3"/>
</dbReference>
<dbReference type="InterPro" id="IPR007641">
    <property type="entry name" value="RNA_pol_Rpb2_7"/>
</dbReference>
<dbReference type="InterPro" id="IPR014724">
    <property type="entry name" value="RNA_pol_RPB2_OB-fold"/>
</dbReference>
<dbReference type="NCBIfam" id="NF001616">
    <property type="entry name" value="PRK00405.1"/>
    <property type="match status" value="1"/>
</dbReference>
<dbReference type="NCBIfam" id="TIGR02013">
    <property type="entry name" value="rpoB"/>
    <property type="match status" value="1"/>
</dbReference>
<dbReference type="PANTHER" id="PTHR20856">
    <property type="entry name" value="DNA-DIRECTED RNA POLYMERASE I SUBUNIT 2"/>
    <property type="match status" value="1"/>
</dbReference>
<dbReference type="Pfam" id="PF04563">
    <property type="entry name" value="RNA_pol_Rpb2_1"/>
    <property type="match status" value="1"/>
</dbReference>
<dbReference type="Pfam" id="PF04561">
    <property type="entry name" value="RNA_pol_Rpb2_2"/>
    <property type="match status" value="2"/>
</dbReference>
<dbReference type="Pfam" id="PF04565">
    <property type="entry name" value="RNA_pol_Rpb2_3"/>
    <property type="match status" value="1"/>
</dbReference>
<dbReference type="Pfam" id="PF10385">
    <property type="entry name" value="RNA_pol_Rpb2_45"/>
    <property type="match status" value="1"/>
</dbReference>
<dbReference type="Pfam" id="PF00562">
    <property type="entry name" value="RNA_pol_Rpb2_6"/>
    <property type="match status" value="1"/>
</dbReference>
<dbReference type="Pfam" id="PF04560">
    <property type="entry name" value="RNA_pol_Rpb2_7"/>
    <property type="match status" value="1"/>
</dbReference>
<dbReference type="SUPFAM" id="SSF64484">
    <property type="entry name" value="beta and beta-prime subunits of DNA dependent RNA-polymerase"/>
    <property type="match status" value="1"/>
</dbReference>
<dbReference type="PROSITE" id="PS01166">
    <property type="entry name" value="RNA_POL_BETA"/>
    <property type="match status" value="1"/>
</dbReference>
<comment type="function">
    <text evidence="1">DNA-dependent RNA polymerase catalyzes the transcription of DNA into RNA using the four ribonucleoside triphosphates as substrates.</text>
</comment>
<comment type="catalytic activity">
    <reaction evidence="1">
        <text>RNA(n) + a ribonucleoside 5'-triphosphate = RNA(n+1) + diphosphate</text>
        <dbReference type="Rhea" id="RHEA:21248"/>
        <dbReference type="Rhea" id="RHEA-COMP:14527"/>
        <dbReference type="Rhea" id="RHEA-COMP:17342"/>
        <dbReference type="ChEBI" id="CHEBI:33019"/>
        <dbReference type="ChEBI" id="CHEBI:61557"/>
        <dbReference type="ChEBI" id="CHEBI:140395"/>
        <dbReference type="EC" id="2.7.7.6"/>
    </reaction>
</comment>
<comment type="subunit">
    <text evidence="1">The RNAP catalytic core consists of 2 alpha, 1 beta, 1 beta' and 1 omega subunit. When a sigma factor is associated with the core the holoenzyme is formed, which can initiate transcription.</text>
</comment>
<comment type="similarity">
    <text evidence="1">Belongs to the RNA polymerase beta chain family.</text>
</comment>
<accession>C1CTL4</accession>
<protein>
    <recommendedName>
        <fullName evidence="1">DNA-directed RNA polymerase subunit beta</fullName>
        <shortName evidence="1">RNAP subunit beta</shortName>
        <ecNumber evidence="1">2.7.7.6</ecNumber>
    </recommendedName>
    <alternativeName>
        <fullName evidence="1">RNA polymerase subunit beta</fullName>
    </alternativeName>
    <alternativeName>
        <fullName evidence="1">Transcriptase subunit beta</fullName>
    </alternativeName>
</protein>
<feature type="chain" id="PRO_1000165829" description="DNA-directed RNA polymerase subunit beta">
    <location>
        <begin position="1"/>
        <end position="1203"/>
    </location>
</feature>
<feature type="region of interest" description="Disordered" evidence="2">
    <location>
        <begin position="1174"/>
        <end position="1203"/>
    </location>
</feature>
<feature type="compositionally biased region" description="Basic and acidic residues" evidence="2">
    <location>
        <begin position="1174"/>
        <end position="1195"/>
    </location>
</feature>
<sequence>MAGHDVQYGKHRTRRSFSRIKEVLDLPNLIEIQTDSFKAFLDHGLKEVFEDVLPISNFTDTMELEFVGYEIKEPKYTLEEARIHDASYSAPIFVTFRLINKETGEIKTQEVFFGDFPIMTEMGTFIINGGERIIVSQLVRSPGVYFNDKVDKNGKVGYGSTVIPNRGAWLELESDSKDITYTRIDRTRKIPFTTLVRALGFSGDDEIFDIFGDSELVRNTVEKDIHKNPMDSRTDEALKEIYERLRPGEPKTAESSRSLLVARFFDPRRYDLAAVGRYKINKKLNVKTRLLNQTIAEPLVDPETGEILVEAGTIMTRSVIESIESHLDGDLNKIVYIPNDAAVVTEPVVLQKFKVVAPTDPDRVVTIIGNANPDDKVRTVTPADILAEMSYFLNLAEGLGRVDDIDHLGNRRIRAVGELLANQVRLGLSRMERNVRERMSVQDNEVLTPQQIINIRPVTAAVKEFFGSSQLSQFMDQHNPLSELSHKRRLSALGPGGLTRDRAGYEVRDVHYTHYGRMCPIETPEGPNIGLINNLSSYGHLNKYGFVQTPYRKVDRETGVVTNEIVWLTADEEDEYTVAQANSRLNEDGTFAEKIVMGRHQGVNQEYPANIVDYMDVSPKQVVAVATACIPFLENDDSNRALMGANMQRQAVPLINPQAPYVGTGMEYQAAHDSGAAVIAQYDGKVTYADADKVEVRREDGSLDVYHIQKFRRSNSGTAYNQRTLVKVGDVVEKGDFIADGPSMENGEMALGQNPIVAYMTWEGYNFEDAVIMSERLVKDDVYTSVHLEEYESETRDTKLGPEEITREIPNVGEDALKDLDEMGIIRIGAEVKEGDILVGKVTPKGEKDLSAEERLLHAIFGDKSREVRDTSLRVPHGADGVVRDVKIFTRVNGDELQSGVNMLVRVYIAQKRKIKVGDKMAGRHGNKGVVSRIVPVEDMPYLPDGTPVDIMLNPLGVPSRMNIGQVMELHLGMAARTLGIHIATPVFDGASSEDLWSTVKEAGMDSDAKTILYDGRTGEPFDNRVSVGVMYMIKLHHMVDDKLHARSVGPYSTVTQQPLGGKAQFGGQRFGEMEVWALEAYGASNVLQEILTYKSDDINGRLKAYEAITKGKPIPKPGVPESFRVLVKELQSLGLDMRVLDEDDQEVELRDLDEGMDEDVIHVDDLEKAREKAAQEAKAAFEAEEAEKATKAEATEEAAEQE</sequence>
<gene>
    <name evidence="1" type="primary">rpoB</name>
    <name type="ordered locus">SPT_1938</name>
</gene>
<keyword id="KW-0240">DNA-directed RNA polymerase</keyword>
<keyword id="KW-0548">Nucleotidyltransferase</keyword>
<keyword id="KW-0804">Transcription</keyword>
<keyword id="KW-0808">Transferase</keyword>
<evidence type="ECO:0000255" key="1">
    <source>
        <dbReference type="HAMAP-Rule" id="MF_01321"/>
    </source>
</evidence>
<evidence type="ECO:0000256" key="2">
    <source>
        <dbReference type="SAM" id="MobiDB-lite"/>
    </source>
</evidence>
<organism>
    <name type="scientific">Streptococcus pneumoniae (strain Taiwan19F-14)</name>
    <dbReference type="NCBI Taxonomy" id="487213"/>
    <lineage>
        <taxon>Bacteria</taxon>
        <taxon>Bacillati</taxon>
        <taxon>Bacillota</taxon>
        <taxon>Bacilli</taxon>
        <taxon>Lactobacillales</taxon>
        <taxon>Streptococcaceae</taxon>
        <taxon>Streptococcus</taxon>
    </lineage>
</organism>
<reference key="1">
    <citation type="journal article" date="2010" name="Genome Biol.">
        <title>Structure and dynamics of the pan-genome of Streptococcus pneumoniae and closely related species.</title>
        <authorList>
            <person name="Donati C."/>
            <person name="Hiller N.L."/>
            <person name="Tettelin H."/>
            <person name="Muzzi A."/>
            <person name="Croucher N.J."/>
            <person name="Angiuoli S.V."/>
            <person name="Oggioni M."/>
            <person name="Dunning Hotopp J.C."/>
            <person name="Hu F.Z."/>
            <person name="Riley D.R."/>
            <person name="Covacci A."/>
            <person name="Mitchell T.J."/>
            <person name="Bentley S.D."/>
            <person name="Kilian M."/>
            <person name="Ehrlich G.D."/>
            <person name="Rappuoli R."/>
            <person name="Moxon E.R."/>
            <person name="Masignani V."/>
        </authorList>
    </citation>
    <scope>NUCLEOTIDE SEQUENCE [LARGE SCALE GENOMIC DNA]</scope>
    <source>
        <strain>Taiwan19F-14</strain>
    </source>
</reference>
<name>RPOB_STRZT</name>